<dbReference type="EC" id="3.6.1.31" evidence="1"/>
<dbReference type="EMBL" id="CP000548">
    <property type="protein sequence ID" value="ABO05592.1"/>
    <property type="molecule type" value="Genomic_DNA"/>
</dbReference>
<dbReference type="RefSeq" id="WP_004202813.1">
    <property type="nucleotide sequence ID" value="NZ_CP007802.1"/>
</dbReference>
<dbReference type="SMR" id="A3MPU2"/>
<dbReference type="KEGG" id="bmaz:BM44_575"/>
<dbReference type="KEGG" id="bmn:BMA10247_2757"/>
<dbReference type="PATRIC" id="fig|320389.8.peg.629"/>
<dbReference type="UniPathway" id="UPA00031">
    <property type="reaction ID" value="UER00007"/>
</dbReference>
<dbReference type="GO" id="GO:0005737">
    <property type="term" value="C:cytoplasm"/>
    <property type="evidence" value="ECO:0007669"/>
    <property type="project" value="UniProtKB-SubCell"/>
</dbReference>
<dbReference type="GO" id="GO:0005524">
    <property type="term" value="F:ATP binding"/>
    <property type="evidence" value="ECO:0007669"/>
    <property type="project" value="UniProtKB-KW"/>
</dbReference>
<dbReference type="GO" id="GO:0004636">
    <property type="term" value="F:phosphoribosyl-ATP diphosphatase activity"/>
    <property type="evidence" value="ECO:0007669"/>
    <property type="project" value="UniProtKB-UniRule"/>
</dbReference>
<dbReference type="GO" id="GO:0000105">
    <property type="term" value="P:L-histidine biosynthetic process"/>
    <property type="evidence" value="ECO:0007669"/>
    <property type="project" value="UniProtKB-UniRule"/>
</dbReference>
<dbReference type="CDD" id="cd11534">
    <property type="entry name" value="NTP-PPase_HisIE_like"/>
    <property type="match status" value="1"/>
</dbReference>
<dbReference type="Gene3D" id="1.10.287.1080">
    <property type="entry name" value="MazG-like"/>
    <property type="match status" value="1"/>
</dbReference>
<dbReference type="HAMAP" id="MF_01020">
    <property type="entry name" value="HisE"/>
    <property type="match status" value="1"/>
</dbReference>
<dbReference type="InterPro" id="IPR008179">
    <property type="entry name" value="HisE"/>
</dbReference>
<dbReference type="InterPro" id="IPR021130">
    <property type="entry name" value="PRib-ATP_PPHydrolase-like"/>
</dbReference>
<dbReference type="NCBIfam" id="TIGR03188">
    <property type="entry name" value="histidine_hisI"/>
    <property type="match status" value="1"/>
</dbReference>
<dbReference type="NCBIfam" id="NF001611">
    <property type="entry name" value="PRK00400.1-3"/>
    <property type="match status" value="1"/>
</dbReference>
<dbReference type="PANTHER" id="PTHR42945">
    <property type="entry name" value="HISTIDINE BIOSYNTHESIS BIFUNCTIONAL PROTEIN"/>
    <property type="match status" value="1"/>
</dbReference>
<dbReference type="PANTHER" id="PTHR42945:SF9">
    <property type="entry name" value="HISTIDINE BIOSYNTHESIS BIFUNCTIONAL PROTEIN HISIE"/>
    <property type="match status" value="1"/>
</dbReference>
<dbReference type="Pfam" id="PF01503">
    <property type="entry name" value="PRA-PH"/>
    <property type="match status" value="1"/>
</dbReference>
<dbReference type="SUPFAM" id="SSF101386">
    <property type="entry name" value="all-alpha NTP pyrophosphatases"/>
    <property type="match status" value="1"/>
</dbReference>
<sequence>MTQSTTEDTLLRLAAVIDSRKGGDPEQSYVSRLFHKGDDAILKKIGEEATEVVLAAKDVRQGGAPSALVGEVADLWFHCLVALSHFDLSPADVIAELERREGMSGIEEKALRKRREREENGG</sequence>
<organism>
    <name type="scientific">Burkholderia mallei (strain NCTC 10247)</name>
    <dbReference type="NCBI Taxonomy" id="320389"/>
    <lineage>
        <taxon>Bacteria</taxon>
        <taxon>Pseudomonadati</taxon>
        <taxon>Pseudomonadota</taxon>
        <taxon>Betaproteobacteria</taxon>
        <taxon>Burkholderiales</taxon>
        <taxon>Burkholderiaceae</taxon>
        <taxon>Burkholderia</taxon>
        <taxon>pseudomallei group</taxon>
    </lineage>
</organism>
<protein>
    <recommendedName>
        <fullName evidence="1">Phosphoribosyl-ATP pyrophosphatase</fullName>
        <shortName evidence="1">PRA-PH</shortName>
        <ecNumber evidence="1">3.6.1.31</ecNumber>
    </recommendedName>
</protein>
<accession>A3MPU2</accession>
<evidence type="ECO:0000255" key="1">
    <source>
        <dbReference type="HAMAP-Rule" id="MF_01020"/>
    </source>
</evidence>
<proteinExistence type="inferred from homology"/>
<name>HIS2_BURM7</name>
<keyword id="KW-0028">Amino-acid biosynthesis</keyword>
<keyword id="KW-0067">ATP-binding</keyword>
<keyword id="KW-0963">Cytoplasm</keyword>
<keyword id="KW-0368">Histidine biosynthesis</keyword>
<keyword id="KW-0378">Hydrolase</keyword>
<keyword id="KW-0547">Nucleotide-binding</keyword>
<comment type="catalytic activity">
    <reaction evidence="1">
        <text>1-(5-phospho-beta-D-ribosyl)-ATP + H2O = 1-(5-phospho-beta-D-ribosyl)-5'-AMP + diphosphate + H(+)</text>
        <dbReference type="Rhea" id="RHEA:22828"/>
        <dbReference type="ChEBI" id="CHEBI:15377"/>
        <dbReference type="ChEBI" id="CHEBI:15378"/>
        <dbReference type="ChEBI" id="CHEBI:33019"/>
        <dbReference type="ChEBI" id="CHEBI:59457"/>
        <dbReference type="ChEBI" id="CHEBI:73183"/>
        <dbReference type="EC" id="3.6.1.31"/>
    </reaction>
</comment>
<comment type="pathway">
    <text evidence="1">Amino-acid biosynthesis; L-histidine biosynthesis; L-histidine from 5-phospho-alpha-D-ribose 1-diphosphate: step 2/9.</text>
</comment>
<comment type="subcellular location">
    <subcellularLocation>
        <location evidence="1">Cytoplasm</location>
    </subcellularLocation>
</comment>
<comment type="similarity">
    <text evidence="1">Belongs to the PRA-PH family.</text>
</comment>
<gene>
    <name evidence="1" type="primary">hisE</name>
    <name type="ordered locus">BMA10247_2757</name>
</gene>
<feature type="chain" id="PRO_1000063327" description="Phosphoribosyl-ATP pyrophosphatase">
    <location>
        <begin position="1"/>
        <end position="122"/>
    </location>
</feature>
<reference key="1">
    <citation type="journal article" date="2010" name="Genome Biol. Evol.">
        <title>Continuing evolution of Burkholderia mallei through genome reduction and large-scale rearrangements.</title>
        <authorList>
            <person name="Losada L."/>
            <person name="Ronning C.M."/>
            <person name="DeShazer D."/>
            <person name="Woods D."/>
            <person name="Fedorova N."/>
            <person name="Kim H.S."/>
            <person name="Shabalina S.A."/>
            <person name="Pearson T.R."/>
            <person name="Brinkac L."/>
            <person name="Tan P."/>
            <person name="Nandi T."/>
            <person name="Crabtree J."/>
            <person name="Badger J."/>
            <person name="Beckstrom-Sternberg S."/>
            <person name="Saqib M."/>
            <person name="Schutzer S.E."/>
            <person name="Keim P."/>
            <person name="Nierman W.C."/>
        </authorList>
    </citation>
    <scope>NUCLEOTIDE SEQUENCE [LARGE SCALE GENOMIC DNA]</scope>
    <source>
        <strain>NCTC 10247</strain>
    </source>
</reference>